<comment type="function">
    <text evidence="1">Probably catalyzes the deacetylation of acetylated carbohydrates an important step in the degradation of oligosaccharides.</text>
</comment>
<comment type="cofactor">
    <cofactor evidence="1">
        <name>Mg(2+)</name>
        <dbReference type="ChEBI" id="CHEBI:18420"/>
    </cofactor>
</comment>
<comment type="similarity">
    <text evidence="1">Belongs to the YdjC deacetylase family.</text>
</comment>
<protein>
    <recommendedName>
        <fullName evidence="1">Carbohydrate deacetylase</fullName>
        <ecNumber evidence="1">3.5.1.-</ecNumber>
    </recommendedName>
</protein>
<name>YDJC_GEOSE</name>
<accession>Q45401</accession>
<organism>
    <name type="scientific">Geobacillus stearothermophilus</name>
    <name type="common">Bacillus stearothermophilus</name>
    <dbReference type="NCBI Taxonomy" id="1422"/>
    <lineage>
        <taxon>Bacteria</taxon>
        <taxon>Bacillati</taxon>
        <taxon>Bacillota</taxon>
        <taxon>Bacilli</taxon>
        <taxon>Bacillales</taxon>
        <taxon>Anoxybacillaceae</taxon>
        <taxon>Geobacillus</taxon>
    </lineage>
</organism>
<keyword id="KW-0119">Carbohydrate metabolism</keyword>
<keyword id="KW-0378">Hydrolase</keyword>
<keyword id="KW-0460">Magnesium</keyword>
<keyword id="KW-0479">Metal-binding</keyword>
<evidence type="ECO:0000255" key="1">
    <source>
        <dbReference type="HAMAP-Rule" id="MF_01246"/>
    </source>
</evidence>
<proteinExistence type="inferred from homology"/>
<gene>
    <name type="primary">celC</name>
</gene>
<sequence length="245" mass="27430">MPRYCIVNADDFGYSKGVNYGILEAFQNGVVTSATLMANMPAAEHAARLAKDHPELGVGIHFVLTCGRPLADVPSLVNENGEFPRRGEALVGARRGDIERELCAQLERFFSFGLTPTHIDSHHHVHEHPNVFPVVEQLAERYRLPIRPVRTARPHRLPTVDVFFPDFYGDGLTKDRFISLIDRIGDGQTAEVMCHPAYIDVPLASGSSYCQQRVEELAVLTDPTLVAEMAERGVQLITYREFYKL</sequence>
<dbReference type="EC" id="3.5.1.-" evidence="1"/>
<dbReference type="EMBL" id="U07818">
    <property type="protein sequence ID" value="AAA17391.1"/>
    <property type="molecule type" value="Unassigned_DNA"/>
</dbReference>
<dbReference type="PIR" id="D49898">
    <property type="entry name" value="D49898"/>
</dbReference>
<dbReference type="SMR" id="Q45401"/>
<dbReference type="GO" id="GO:0019213">
    <property type="term" value="F:deacetylase activity"/>
    <property type="evidence" value="ECO:0007669"/>
    <property type="project" value="TreeGrafter"/>
</dbReference>
<dbReference type="GO" id="GO:0016811">
    <property type="term" value="F:hydrolase activity, acting on carbon-nitrogen (but not peptide) bonds, in linear amides"/>
    <property type="evidence" value="ECO:0007669"/>
    <property type="project" value="UniProtKB-UniRule"/>
</dbReference>
<dbReference type="GO" id="GO:0046872">
    <property type="term" value="F:metal ion binding"/>
    <property type="evidence" value="ECO:0007669"/>
    <property type="project" value="UniProtKB-KW"/>
</dbReference>
<dbReference type="GO" id="GO:0000272">
    <property type="term" value="P:polysaccharide catabolic process"/>
    <property type="evidence" value="ECO:0007669"/>
    <property type="project" value="InterPro"/>
</dbReference>
<dbReference type="CDD" id="cd10803">
    <property type="entry name" value="YdjC_EF3048_like"/>
    <property type="match status" value="1"/>
</dbReference>
<dbReference type="Gene3D" id="3.20.20.370">
    <property type="entry name" value="Glycoside hydrolase/deacetylase"/>
    <property type="match status" value="1"/>
</dbReference>
<dbReference type="HAMAP" id="MF_01246">
    <property type="entry name" value="COD"/>
    <property type="match status" value="1"/>
</dbReference>
<dbReference type="InterPro" id="IPR022948">
    <property type="entry name" value="COD_ChbG_bac"/>
</dbReference>
<dbReference type="InterPro" id="IPR011330">
    <property type="entry name" value="Glyco_hydro/deAcase_b/a-brl"/>
</dbReference>
<dbReference type="InterPro" id="IPR006879">
    <property type="entry name" value="YdjC-like"/>
</dbReference>
<dbReference type="NCBIfam" id="NF002559">
    <property type="entry name" value="PRK02134.1"/>
    <property type="match status" value="1"/>
</dbReference>
<dbReference type="PANTHER" id="PTHR31609:SF1">
    <property type="entry name" value="CARBOHYDRATE DEACETYLASE"/>
    <property type="match status" value="1"/>
</dbReference>
<dbReference type="PANTHER" id="PTHR31609">
    <property type="entry name" value="YDJC DEACETYLASE FAMILY MEMBER"/>
    <property type="match status" value="1"/>
</dbReference>
<dbReference type="Pfam" id="PF04794">
    <property type="entry name" value="YdjC"/>
    <property type="match status" value="1"/>
</dbReference>
<dbReference type="SUPFAM" id="SSF88713">
    <property type="entry name" value="Glycoside hydrolase/deacetylase"/>
    <property type="match status" value="1"/>
</dbReference>
<reference key="1">
    <citation type="journal article" date="1993" name="J. Bacteriol.">
        <title>Cloning and sequencing of a cellobiose phosphotransferase system operon from Bacillus stearothermophilus XL-65-6 and functional expression in Escherichia coli.</title>
        <authorList>
            <person name="Lai X."/>
            <person name="Ingram L.O."/>
        </authorList>
    </citation>
    <scope>NUCLEOTIDE SEQUENCE [GENOMIC DNA]</scope>
    <source>
        <strain>XL-65-6</strain>
    </source>
</reference>
<feature type="chain" id="PRO_0000051588" description="Carbohydrate deacetylase">
    <location>
        <begin position="1"/>
        <end position="245"/>
    </location>
</feature>
<feature type="binding site" evidence="1">
    <location>
        <position position="61"/>
    </location>
    <ligand>
        <name>Mg(2+)</name>
        <dbReference type="ChEBI" id="CHEBI:18420"/>
    </ligand>
</feature>
<feature type="binding site" evidence="1">
    <location>
        <position position="122"/>
    </location>
    <ligand>
        <name>Mg(2+)</name>
        <dbReference type="ChEBI" id="CHEBI:18420"/>
    </ligand>
</feature>